<accession>C0HL47</accession>
<organism evidence="2">
    <name type="scientific">Rana italica</name>
    <name type="common">Italian stream frog</name>
    <name type="synonym">Rana graeca italica</name>
    <dbReference type="NCBI Taxonomy" id="147302"/>
    <lineage>
        <taxon>Eukaryota</taxon>
        <taxon>Metazoa</taxon>
        <taxon>Chordata</taxon>
        <taxon>Craniata</taxon>
        <taxon>Vertebrata</taxon>
        <taxon>Euteleostomi</taxon>
        <taxon>Amphibia</taxon>
        <taxon>Batrachia</taxon>
        <taxon>Anura</taxon>
        <taxon>Neobatrachia</taxon>
        <taxon>Ranoidea</taxon>
        <taxon>Ranidae</taxon>
        <taxon>Rana</taxon>
        <taxon>Rana</taxon>
    </lineage>
</organism>
<comment type="function">
    <text evidence="1">Antimicrobial peptide active against Gram-positive bacterium S.epidermidis ATCC 12228 (MIC=4 uM), against Gram-negative bacterium E.coli ATCC 25922 (MIC=64 uM) and against yeast C.parapsilosis ATCC 22019 (MIC=16 uM). Has hemolytic and cytotoxic activity.</text>
</comment>
<comment type="subcellular location">
    <subcellularLocation>
        <location evidence="1">Secreted</location>
    </subcellularLocation>
</comment>
<comment type="tissue specificity">
    <text evidence="4">Expressed by the skin glands.</text>
</comment>
<comment type="mass spectrometry"/>
<comment type="mass spectrometry">
    <text>Oxidized.</text>
</comment>
<comment type="similarity">
    <text evidence="3">Belongs to the frog skin active peptide (FSAP) family. Brevinin subfamily.</text>
</comment>
<dbReference type="GO" id="GO:0005576">
    <property type="term" value="C:extracellular region"/>
    <property type="evidence" value="ECO:0007669"/>
    <property type="project" value="UniProtKB-SubCell"/>
</dbReference>
<dbReference type="GO" id="GO:0042742">
    <property type="term" value="P:defense response to bacterium"/>
    <property type="evidence" value="ECO:0007669"/>
    <property type="project" value="UniProtKB-KW"/>
</dbReference>
<dbReference type="GO" id="GO:0050832">
    <property type="term" value="P:defense response to fungus"/>
    <property type="evidence" value="ECO:0007669"/>
    <property type="project" value="UniProtKB-KW"/>
</dbReference>
<dbReference type="GO" id="GO:0031640">
    <property type="term" value="P:killing of cells of another organism"/>
    <property type="evidence" value="ECO:0007669"/>
    <property type="project" value="UniProtKB-KW"/>
</dbReference>
<dbReference type="InterPro" id="IPR012520">
    <property type="entry name" value="Antimicrobial_frog_1"/>
</dbReference>
<dbReference type="Pfam" id="PF08018">
    <property type="entry name" value="Antimicrobial_1"/>
    <property type="match status" value="1"/>
</dbReference>
<name>BR1A_RANIT</name>
<evidence type="ECO:0000269" key="1">
    <source>
    </source>
</evidence>
<evidence type="ECO:0000303" key="2">
    <source>
    </source>
</evidence>
<evidence type="ECO:0000305" key="3"/>
<evidence type="ECO:0000305" key="4">
    <source>
    </source>
</evidence>
<feature type="peptide" id="PRO_0000442262" description="Brevinin-1ITa" evidence="1">
    <location>
        <begin position="1"/>
        <end position="20"/>
    </location>
</feature>
<feature type="modified residue" description="Methionine sulfoxide; partial" evidence="1">
    <location>
        <position position="8"/>
    </location>
</feature>
<feature type="disulfide bond" evidence="1">
    <location>
        <begin position="14"/>
        <end position="20"/>
    </location>
</feature>
<proteinExistence type="evidence at protein level"/>
<reference evidence="3" key="1">
    <citation type="journal article" date="2017" name="J. Pept. Sci.">
        <title>Cytotoxic peptides with insulin-releasing activities from skin secretions of the Italian stream frog Rana italica (Ranidae).</title>
        <authorList>
            <person name="Conlon J.M."/>
            <person name="Musale V."/>
            <person name="Attoub S."/>
            <person name="Mangoni M.L."/>
            <person name="Leprince J."/>
            <person name="Coquet L."/>
            <person name="Jouenne T."/>
            <person name="Abdel-Wahab Y.H.A."/>
            <person name="Flatt P.R."/>
            <person name="Rinaldi A.C."/>
        </authorList>
    </citation>
    <scope>PROTEIN SEQUENCE</scope>
    <scope>FUNCTION</scope>
    <scope>SUBCELLULAR LOCATION</scope>
    <scope>MASS SPECTROMETRY</scope>
    <scope>OXIDATION AT MET-8</scope>
    <scope>DISULFIDE BOND</scope>
    <source>
        <tissue evidence="2">Skin secretion</tissue>
    </source>
</reference>
<sequence>IVPFLLGMVPKLVCLITKKC</sequence>
<protein>
    <recommendedName>
        <fullName evidence="2">Brevinin-1ITa</fullName>
    </recommendedName>
</protein>
<keyword id="KW-0878">Amphibian defense peptide</keyword>
<keyword id="KW-0044">Antibiotic</keyword>
<keyword id="KW-0929">Antimicrobial</keyword>
<keyword id="KW-0204">Cytolysis</keyword>
<keyword id="KW-0903">Direct protein sequencing</keyword>
<keyword id="KW-1015">Disulfide bond</keyword>
<keyword id="KW-0295">Fungicide</keyword>
<keyword id="KW-0354">Hemolysis</keyword>
<keyword id="KW-0558">Oxidation</keyword>
<keyword id="KW-0964">Secreted</keyword>